<sequence>MLSLNEIKFPVHWNLKPNPTSYVDHVYQEGLEFGVWRPDNKRDIVAHNNVVSLSKFFWPTVDFERLVMGGELMLWFFTFDDALDSGIYDDTKSLEIVRRMSAVFMEGTLCDDASGPEKVGYRLRQKCLEMCGKRRRDTFNRFITSCVQWIDSIIPFNKVKDGGSPHIELYSFLRKINIGAYPCVTLSEVFIDHYLDHSIWSSPRWVKMNENIAIVVTLINDLVSYEKEVNDNAGALNPLYFFQQQRKFNLPDSYNHMVNLIHFFVQDYLANEESFLKSLEPFENEKQQQDIYFMLDHLHFLISGSRMWSMQTPRYCSPTSPFIEMRPSFNQGNLMSKL</sequence>
<name>TPS1_CACFS</name>
<keyword id="KW-0456">Lyase</keyword>
<keyword id="KW-0479">Metal-binding</keyword>
<keyword id="KW-1185">Reference proteome</keyword>
<reference key="1">
    <citation type="journal article" date="2018" name="Sci. Rep.">
        <title>Diversity and Functional Evolution of Terpene Synthases in Dictyostelid Social Amoebae.</title>
        <authorList>
            <person name="Chen X."/>
            <person name="Kollner T.G."/>
            <person name="Shaulsky G."/>
            <person name="Jia Q."/>
            <person name="Dickschat J.S."/>
            <person name="Gershenzon J."/>
            <person name="Chen F."/>
        </authorList>
    </citation>
    <scope>NUCLEOTIDE SEQUENCE [MRNA]</scope>
    <scope>FUNCTION</scope>
    <scope>CATALYTIC ACTIVITY</scope>
    <source>
        <strain>SH3</strain>
    </source>
</reference>
<reference key="2">
    <citation type="journal article" date="2011" name="Genome Res.">
        <title>Phylogeny-wide analysis of social amoeba genomes highlights ancient origins for complex intercellular communication.</title>
        <authorList>
            <person name="Heidel A.J."/>
            <person name="Lawal H.M."/>
            <person name="Felder M."/>
            <person name="Schilde C."/>
            <person name="Helps N.R."/>
            <person name="Tunggal B."/>
            <person name="Rivero F."/>
            <person name="John U."/>
            <person name="Schleicher M."/>
            <person name="Eichinger L."/>
            <person name="Platzer M."/>
            <person name="Noegel A.A."/>
            <person name="Schaap P."/>
            <person name="Gloeckner G."/>
        </authorList>
    </citation>
    <scope>NUCLEOTIDE SEQUENCE [LARGE SCALE GENOMIC DNA]</scope>
    <source>
        <strain>SH3</strain>
    </source>
</reference>
<accession>F4Q7D4</accession>
<accession>A0A385AJL4</accession>
<dbReference type="EC" id="4.2.3.160" evidence="3"/>
<dbReference type="EMBL" id="MG262460">
    <property type="protein sequence ID" value="AXN72968.1"/>
    <property type="molecule type" value="mRNA"/>
</dbReference>
<dbReference type="EMBL" id="GL883024">
    <property type="protein sequence ID" value="EGG16316.1"/>
    <property type="molecule type" value="Genomic_DNA"/>
</dbReference>
<dbReference type="RefSeq" id="XP_004354700.1">
    <property type="nucleotide sequence ID" value="XM_004354648.1"/>
</dbReference>
<dbReference type="SMR" id="F4Q7D4"/>
<dbReference type="STRING" id="1054147.F4Q7D4"/>
<dbReference type="EnsemblProtists" id="EGG16316">
    <property type="protein sequence ID" value="EGG16316"/>
    <property type="gene ID" value="DFA_09346"/>
</dbReference>
<dbReference type="GeneID" id="14868174"/>
<dbReference type="KEGG" id="dfa:DFA_09346"/>
<dbReference type="OMA" id="WSMQTPR"/>
<dbReference type="OrthoDB" id="6486656at2759"/>
<dbReference type="Proteomes" id="UP000007797">
    <property type="component" value="Unassembled WGS sequence"/>
</dbReference>
<dbReference type="GO" id="GO:0046872">
    <property type="term" value="F:metal ion binding"/>
    <property type="evidence" value="ECO:0007669"/>
    <property type="project" value="UniProtKB-KW"/>
</dbReference>
<dbReference type="GO" id="GO:0010333">
    <property type="term" value="F:terpene synthase activity"/>
    <property type="evidence" value="ECO:0007669"/>
    <property type="project" value="InterPro"/>
</dbReference>
<dbReference type="GO" id="GO:0046246">
    <property type="term" value="P:terpene biosynthetic process"/>
    <property type="evidence" value="ECO:0007669"/>
    <property type="project" value="UniProtKB-ARBA"/>
</dbReference>
<dbReference type="FunFam" id="1.10.600.10:FF:000047">
    <property type="entry name" value="Terpene synthase"/>
    <property type="match status" value="1"/>
</dbReference>
<dbReference type="Gene3D" id="1.10.600.10">
    <property type="entry name" value="Farnesyl Diphosphate Synthase"/>
    <property type="match status" value="1"/>
</dbReference>
<dbReference type="InterPro" id="IPR008949">
    <property type="entry name" value="Isoprenoid_synthase_dom_sf"/>
</dbReference>
<dbReference type="InterPro" id="IPR034686">
    <property type="entry name" value="Terpene_cyclase-like_2"/>
</dbReference>
<dbReference type="PANTHER" id="PTHR35201">
    <property type="entry name" value="TERPENE SYNTHASE"/>
    <property type="match status" value="1"/>
</dbReference>
<dbReference type="PANTHER" id="PTHR35201:SF3">
    <property type="entry name" value="TERPENE SYNTHASE 2-RELATED"/>
    <property type="match status" value="1"/>
</dbReference>
<dbReference type="Pfam" id="PF19086">
    <property type="entry name" value="Terpene_syn_C_2"/>
    <property type="match status" value="1"/>
</dbReference>
<dbReference type="SUPFAM" id="SSF48576">
    <property type="entry name" value="Terpenoid synthases"/>
    <property type="match status" value="1"/>
</dbReference>
<gene>
    <name evidence="4" type="primary">TPS1</name>
    <name type="ORF">DFA_09346</name>
</gene>
<protein>
    <recommendedName>
        <fullName evidence="4">Terpene synthase 1</fullName>
        <ecNumber evidence="3">4.2.3.160</ecNumber>
    </recommendedName>
</protein>
<evidence type="ECO:0000250" key="1">
    <source>
        <dbReference type="UniProtKB" id="Q54BE5"/>
    </source>
</evidence>
<evidence type="ECO:0000250" key="2">
    <source>
        <dbReference type="UniProtKB" id="Q55E23"/>
    </source>
</evidence>
<evidence type="ECO:0000269" key="3">
    <source>
    </source>
</evidence>
<evidence type="ECO:0000303" key="4">
    <source>
    </source>
</evidence>
<evidence type="ECO:0000305" key="5"/>
<comment type="function">
    <text evidence="3">Terpene synthase that converts its substrate farnesyl diphosphate (FPP) into the sesquiterpene protoillud-7-ene.</text>
</comment>
<comment type="catalytic activity">
    <reaction evidence="3">
        <text>(2E,6E)-farnesyl diphosphate = (2S,3R,6S,9S)-(-)-protoillud-7-ene + diphosphate</text>
        <dbReference type="Rhea" id="RHEA:53628"/>
        <dbReference type="ChEBI" id="CHEBI:33019"/>
        <dbReference type="ChEBI" id="CHEBI:137530"/>
        <dbReference type="ChEBI" id="CHEBI:175763"/>
        <dbReference type="EC" id="4.2.3.160"/>
    </reaction>
    <physiologicalReaction direction="left-to-right" evidence="3">
        <dbReference type="Rhea" id="RHEA:53629"/>
    </physiologicalReaction>
</comment>
<comment type="domain">
    <text evidence="2">Contains several highly conserved motifs that are important for catalytic activity including the aspartate-rich 'DDxx(x)D/E' motif and the 'NDxxSxxxD/E' motif, both of which are involved in complexing metal ions to coordinate the binding of the isoprenyl diphosphate substrate in the active site.</text>
</comment>
<comment type="similarity">
    <text evidence="5">Belongs to the terpene synthase family.</text>
</comment>
<proteinExistence type="evidence at protein level"/>
<organism>
    <name type="scientific">Cavenderia fasciculata</name>
    <name type="common">Slime mold</name>
    <name type="synonym">Dictyostelium fasciculatum</name>
    <dbReference type="NCBI Taxonomy" id="261658"/>
    <lineage>
        <taxon>Eukaryota</taxon>
        <taxon>Amoebozoa</taxon>
        <taxon>Evosea</taxon>
        <taxon>Eumycetozoa</taxon>
        <taxon>Dictyostelia</taxon>
        <taxon>Acytosteliales</taxon>
        <taxon>Cavenderiaceae</taxon>
        <taxon>Cavenderia</taxon>
    </lineage>
</organism>
<feature type="chain" id="PRO_0000457031" description="Terpene synthase 1">
    <location>
        <begin position="1"/>
        <end position="338"/>
    </location>
</feature>
<feature type="short sequence motif" description="DDxx(x)D/E motif" evidence="1">
    <location>
        <begin position="80"/>
        <end position="85"/>
    </location>
</feature>
<feature type="short sequence motif" description="NDxxSxxxD/E motif" evidence="1">
    <location>
        <begin position="220"/>
        <end position="228"/>
    </location>
</feature>